<comment type="function">
    <text evidence="1">This protein causes differentiation of brain cells, stimulation of neural regeneration, and inhibition of proliferation of tumor cells.</text>
</comment>
<comment type="PTM">
    <text evidence="1">Phosphorylated; stimulated by phorbol ester.</text>
</comment>
<comment type="similarity">
    <text evidence="4">Belongs to the actin-binding proteins ADF family. GMF subfamily.</text>
</comment>
<accession>Q9CQI3</accession>
<accession>Q3UQX5</accession>
<accession>Q9ERL8</accession>
<name>GMFB_MOUSE</name>
<reference key="1">
    <citation type="journal article" date="2001" name="Cytogenet. Cell Genet.">
        <title>Identification and isolation of a full-length clone of mouse GMFB (Gmfb), a putative intracellular kinase regulator, differentially expressed in telencephalon.</title>
        <authorList>
            <person name="Bourgeois F."/>
            <person name="Guimiot F."/>
            <person name="Mas C."/>
            <person name="Bulfone A."/>
            <person name="Levacher B."/>
            <person name="Moalic J.M."/>
            <person name="Simonneau M."/>
        </authorList>
    </citation>
    <scope>NUCLEOTIDE SEQUENCE [MRNA]</scope>
    <source>
        <strain>Swiss/IOPS OF1</strain>
        <tissue>Telencephalon</tissue>
    </source>
</reference>
<reference key="2">
    <citation type="journal article" date="2003" name="Int. Immunol.">
        <title>Glia maturation factor produced by thymic epithelial cells plays a role in T cell differentiation in the thymic microenvironment.</title>
        <authorList>
            <person name="Utsuyama M."/>
            <person name="Shiraishi J."/>
            <person name="Takahashi H."/>
            <person name="Kasai M."/>
            <person name="Hirokawa K."/>
        </authorList>
    </citation>
    <scope>NUCLEOTIDE SEQUENCE [MRNA]</scope>
</reference>
<reference key="3">
    <citation type="journal article" date="2005" name="Science">
        <title>The transcriptional landscape of the mammalian genome.</title>
        <authorList>
            <person name="Carninci P."/>
            <person name="Kasukawa T."/>
            <person name="Katayama S."/>
            <person name="Gough J."/>
            <person name="Frith M.C."/>
            <person name="Maeda N."/>
            <person name="Oyama R."/>
            <person name="Ravasi T."/>
            <person name="Lenhard B."/>
            <person name="Wells C."/>
            <person name="Kodzius R."/>
            <person name="Shimokawa K."/>
            <person name="Bajic V.B."/>
            <person name="Brenner S.E."/>
            <person name="Batalov S."/>
            <person name="Forrest A.R."/>
            <person name="Zavolan M."/>
            <person name="Davis M.J."/>
            <person name="Wilming L.G."/>
            <person name="Aidinis V."/>
            <person name="Allen J.E."/>
            <person name="Ambesi-Impiombato A."/>
            <person name="Apweiler R."/>
            <person name="Aturaliya R.N."/>
            <person name="Bailey T.L."/>
            <person name="Bansal M."/>
            <person name="Baxter L."/>
            <person name="Beisel K.W."/>
            <person name="Bersano T."/>
            <person name="Bono H."/>
            <person name="Chalk A.M."/>
            <person name="Chiu K.P."/>
            <person name="Choudhary V."/>
            <person name="Christoffels A."/>
            <person name="Clutterbuck D.R."/>
            <person name="Crowe M.L."/>
            <person name="Dalla E."/>
            <person name="Dalrymple B.P."/>
            <person name="de Bono B."/>
            <person name="Della Gatta G."/>
            <person name="di Bernardo D."/>
            <person name="Down T."/>
            <person name="Engstrom P."/>
            <person name="Fagiolini M."/>
            <person name="Faulkner G."/>
            <person name="Fletcher C.F."/>
            <person name="Fukushima T."/>
            <person name="Furuno M."/>
            <person name="Futaki S."/>
            <person name="Gariboldi M."/>
            <person name="Georgii-Hemming P."/>
            <person name="Gingeras T.R."/>
            <person name="Gojobori T."/>
            <person name="Green R.E."/>
            <person name="Gustincich S."/>
            <person name="Harbers M."/>
            <person name="Hayashi Y."/>
            <person name="Hensch T.K."/>
            <person name="Hirokawa N."/>
            <person name="Hill D."/>
            <person name="Huminiecki L."/>
            <person name="Iacono M."/>
            <person name="Ikeo K."/>
            <person name="Iwama A."/>
            <person name="Ishikawa T."/>
            <person name="Jakt M."/>
            <person name="Kanapin A."/>
            <person name="Katoh M."/>
            <person name="Kawasawa Y."/>
            <person name="Kelso J."/>
            <person name="Kitamura H."/>
            <person name="Kitano H."/>
            <person name="Kollias G."/>
            <person name="Krishnan S.P."/>
            <person name="Kruger A."/>
            <person name="Kummerfeld S.K."/>
            <person name="Kurochkin I.V."/>
            <person name="Lareau L.F."/>
            <person name="Lazarevic D."/>
            <person name="Lipovich L."/>
            <person name="Liu J."/>
            <person name="Liuni S."/>
            <person name="McWilliam S."/>
            <person name="Madan Babu M."/>
            <person name="Madera M."/>
            <person name="Marchionni L."/>
            <person name="Matsuda H."/>
            <person name="Matsuzawa S."/>
            <person name="Miki H."/>
            <person name="Mignone F."/>
            <person name="Miyake S."/>
            <person name="Morris K."/>
            <person name="Mottagui-Tabar S."/>
            <person name="Mulder N."/>
            <person name="Nakano N."/>
            <person name="Nakauchi H."/>
            <person name="Ng P."/>
            <person name="Nilsson R."/>
            <person name="Nishiguchi S."/>
            <person name="Nishikawa S."/>
            <person name="Nori F."/>
            <person name="Ohara O."/>
            <person name="Okazaki Y."/>
            <person name="Orlando V."/>
            <person name="Pang K.C."/>
            <person name="Pavan W.J."/>
            <person name="Pavesi G."/>
            <person name="Pesole G."/>
            <person name="Petrovsky N."/>
            <person name="Piazza S."/>
            <person name="Reed J."/>
            <person name="Reid J.F."/>
            <person name="Ring B.Z."/>
            <person name="Ringwald M."/>
            <person name="Rost B."/>
            <person name="Ruan Y."/>
            <person name="Salzberg S.L."/>
            <person name="Sandelin A."/>
            <person name="Schneider C."/>
            <person name="Schoenbach C."/>
            <person name="Sekiguchi K."/>
            <person name="Semple C.A."/>
            <person name="Seno S."/>
            <person name="Sessa L."/>
            <person name="Sheng Y."/>
            <person name="Shibata Y."/>
            <person name="Shimada H."/>
            <person name="Shimada K."/>
            <person name="Silva D."/>
            <person name="Sinclair B."/>
            <person name="Sperling S."/>
            <person name="Stupka E."/>
            <person name="Sugiura K."/>
            <person name="Sultana R."/>
            <person name="Takenaka Y."/>
            <person name="Taki K."/>
            <person name="Tammoja K."/>
            <person name="Tan S.L."/>
            <person name="Tang S."/>
            <person name="Taylor M.S."/>
            <person name="Tegner J."/>
            <person name="Teichmann S.A."/>
            <person name="Ueda H.R."/>
            <person name="van Nimwegen E."/>
            <person name="Verardo R."/>
            <person name="Wei C.L."/>
            <person name="Yagi K."/>
            <person name="Yamanishi H."/>
            <person name="Zabarovsky E."/>
            <person name="Zhu S."/>
            <person name="Zimmer A."/>
            <person name="Hide W."/>
            <person name="Bult C."/>
            <person name="Grimmond S.M."/>
            <person name="Teasdale R.D."/>
            <person name="Liu E.T."/>
            <person name="Brusic V."/>
            <person name="Quackenbush J."/>
            <person name="Wahlestedt C."/>
            <person name="Mattick J.S."/>
            <person name="Hume D.A."/>
            <person name="Kai C."/>
            <person name="Sasaki D."/>
            <person name="Tomaru Y."/>
            <person name="Fukuda S."/>
            <person name="Kanamori-Katayama M."/>
            <person name="Suzuki M."/>
            <person name="Aoki J."/>
            <person name="Arakawa T."/>
            <person name="Iida J."/>
            <person name="Imamura K."/>
            <person name="Itoh M."/>
            <person name="Kato T."/>
            <person name="Kawaji H."/>
            <person name="Kawagashira N."/>
            <person name="Kawashima T."/>
            <person name="Kojima M."/>
            <person name="Kondo S."/>
            <person name="Konno H."/>
            <person name="Nakano K."/>
            <person name="Ninomiya N."/>
            <person name="Nishio T."/>
            <person name="Okada M."/>
            <person name="Plessy C."/>
            <person name="Shibata K."/>
            <person name="Shiraki T."/>
            <person name="Suzuki S."/>
            <person name="Tagami M."/>
            <person name="Waki K."/>
            <person name="Watahiki A."/>
            <person name="Okamura-Oho Y."/>
            <person name="Suzuki H."/>
            <person name="Kawai J."/>
            <person name="Hayashizaki Y."/>
        </authorList>
    </citation>
    <scope>NUCLEOTIDE SEQUENCE [LARGE SCALE MRNA]</scope>
    <source>
        <strain>C57BL/6J</strain>
        <tissue>Embryo</tissue>
        <tissue>Eye</tissue>
    </source>
</reference>
<reference key="4">
    <citation type="journal article" date="2004" name="Genome Res.">
        <title>The status, quality, and expansion of the NIH full-length cDNA project: the Mammalian Gene Collection (MGC).</title>
        <authorList>
            <consortium name="The MGC Project Team"/>
        </authorList>
    </citation>
    <scope>NUCLEOTIDE SEQUENCE [LARGE SCALE MRNA]</scope>
    <source>
        <tissue>Eye</tissue>
    </source>
</reference>
<reference key="5">
    <citation type="journal article" date="2010" name="Cell">
        <title>A tissue-specific atlas of mouse protein phosphorylation and expression.</title>
        <authorList>
            <person name="Huttlin E.L."/>
            <person name="Jedrychowski M.P."/>
            <person name="Elias J.E."/>
            <person name="Goswami T."/>
            <person name="Rad R."/>
            <person name="Beausoleil S.A."/>
            <person name="Villen J."/>
            <person name="Haas W."/>
            <person name="Sowa M.E."/>
            <person name="Gygi S.P."/>
        </authorList>
    </citation>
    <scope>IDENTIFICATION BY MASS SPECTROMETRY [LARGE SCALE ANALYSIS]</scope>
    <source>
        <tissue>Brain</tissue>
        <tissue>Brown adipose tissue</tissue>
        <tissue>Kidney</tissue>
        <tissue>Liver</tissue>
        <tissue>Lung</tissue>
        <tissue>Pancreas</tissue>
        <tissue>Spleen</tissue>
        <tissue>Testis</tissue>
    </source>
</reference>
<reference key="6">
    <citation type="journal article" date="2009" name="Protein Sci.">
        <title>NMR solution structures of actin depolymerizing factor homology domains.</title>
        <authorList>
            <person name="Goroncy A.K."/>
            <person name="Koshiba S."/>
            <person name="Tochio N."/>
            <person name="Tomizawa T."/>
            <person name="Sato M."/>
            <person name="Inoue M."/>
            <person name="Watanabe S."/>
            <person name="Hayashizaki Y."/>
            <person name="Tanaka A."/>
            <person name="Kigawa T."/>
            <person name="Yokoyama S."/>
        </authorList>
    </citation>
    <scope>STRUCTURE BY NMR OF 1-139</scope>
</reference>
<dbReference type="EMBL" id="AF297220">
    <property type="protein sequence ID" value="AAG22803.1"/>
    <property type="molecule type" value="mRNA"/>
</dbReference>
<dbReference type="EMBL" id="AB050013">
    <property type="protein sequence ID" value="BAB41099.1"/>
    <property type="molecule type" value="mRNA"/>
</dbReference>
<dbReference type="EMBL" id="AK013947">
    <property type="protein sequence ID" value="BAB29076.1"/>
    <property type="molecule type" value="mRNA"/>
</dbReference>
<dbReference type="EMBL" id="AK013970">
    <property type="protein sequence ID" value="BAB29092.1"/>
    <property type="molecule type" value="mRNA"/>
</dbReference>
<dbReference type="EMBL" id="AK142014">
    <property type="protein sequence ID" value="BAE24913.1"/>
    <property type="molecule type" value="mRNA"/>
</dbReference>
<dbReference type="EMBL" id="BC040233">
    <property type="protein sequence ID" value="AAH40233.1"/>
    <property type="molecule type" value="mRNA"/>
</dbReference>
<dbReference type="CCDS" id="CCDS36898.1"/>
<dbReference type="RefSeq" id="NP_071306.2">
    <property type="nucleotide sequence ID" value="NM_022023.2"/>
</dbReference>
<dbReference type="PDB" id="1V6F">
    <property type="method" value="NMR"/>
    <property type="chains" value="A=2-139"/>
</dbReference>
<dbReference type="PDBsum" id="1V6F"/>
<dbReference type="SMR" id="Q9CQI3"/>
<dbReference type="BioGRID" id="211011">
    <property type="interactions" value="8"/>
</dbReference>
<dbReference type="FunCoup" id="Q9CQI3">
    <property type="interactions" value="1976"/>
</dbReference>
<dbReference type="IntAct" id="Q9CQI3">
    <property type="interactions" value="2"/>
</dbReference>
<dbReference type="STRING" id="10090.ENSMUSP00000107448"/>
<dbReference type="iPTMnet" id="Q9CQI3"/>
<dbReference type="PhosphoSitePlus" id="Q9CQI3"/>
<dbReference type="SwissPalm" id="Q9CQI3"/>
<dbReference type="jPOST" id="Q9CQI3"/>
<dbReference type="PaxDb" id="10090-ENSMUSP00000107448"/>
<dbReference type="ProteomicsDB" id="271404"/>
<dbReference type="Pumba" id="Q9CQI3"/>
<dbReference type="Antibodypedia" id="23938">
    <property type="antibodies" value="258 antibodies from 30 providers"/>
</dbReference>
<dbReference type="DNASU" id="63985"/>
<dbReference type="Ensembl" id="ENSMUST00000111817.8">
    <property type="protein sequence ID" value="ENSMUSP00000107448.2"/>
    <property type="gene ID" value="ENSMUSG00000062014.15"/>
</dbReference>
<dbReference type="GeneID" id="63985"/>
<dbReference type="KEGG" id="mmu:63985"/>
<dbReference type="UCSC" id="uc007thh.2">
    <property type="organism name" value="mouse"/>
</dbReference>
<dbReference type="AGR" id="MGI:1927133"/>
<dbReference type="CTD" id="2764"/>
<dbReference type="MGI" id="MGI:1927133">
    <property type="gene designation" value="Gmfb"/>
</dbReference>
<dbReference type="VEuPathDB" id="HostDB:ENSMUSG00000062014"/>
<dbReference type="eggNOG" id="KOG1736">
    <property type="taxonomic scope" value="Eukaryota"/>
</dbReference>
<dbReference type="GeneTree" id="ENSGT00390000008920"/>
<dbReference type="HOGENOM" id="CLU_087056_1_0_1"/>
<dbReference type="InParanoid" id="Q9CQI3"/>
<dbReference type="OMA" id="IQMMYAG"/>
<dbReference type="PhylomeDB" id="Q9CQI3"/>
<dbReference type="TreeFam" id="TF315147"/>
<dbReference type="BioGRID-ORCS" id="63985">
    <property type="hits" value="0 hits in 76 CRISPR screens"/>
</dbReference>
<dbReference type="ChiTaRS" id="Gmfb">
    <property type="organism name" value="mouse"/>
</dbReference>
<dbReference type="EvolutionaryTrace" id="Q9CQI3"/>
<dbReference type="PRO" id="PR:Q9CQI3"/>
<dbReference type="Proteomes" id="UP000000589">
    <property type="component" value="Chromosome 14"/>
</dbReference>
<dbReference type="RNAct" id="Q9CQI3">
    <property type="molecule type" value="protein"/>
</dbReference>
<dbReference type="Bgee" id="ENSMUSG00000062014">
    <property type="expression patterns" value="Expressed in otic placode and 250 other cell types or tissues"/>
</dbReference>
<dbReference type="ExpressionAtlas" id="Q9CQI3">
    <property type="expression patterns" value="baseline and differential"/>
</dbReference>
<dbReference type="GO" id="GO:0003779">
    <property type="term" value="F:actin binding"/>
    <property type="evidence" value="ECO:0007669"/>
    <property type="project" value="InterPro"/>
</dbReference>
<dbReference type="GO" id="GO:0071933">
    <property type="term" value="F:Arp2/3 complex binding"/>
    <property type="evidence" value="ECO:0007669"/>
    <property type="project" value="InterPro"/>
</dbReference>
<dbReference type="GO" id="GO:0008083">
    <property type="term" value="F:growth factor activity"/>
    <property type="evidence" value="ECO:0007669"/>
    <property type="project" value="UniProtKB-KW"/>
</dbReference>
<dbReference type="GO" id="GO:0071846">
    <property type="term" value="P:actin filament debranching"/>
    <property type="evidence" value="ECO:0007669"/>
    <property type="project" value="InterPro"/>
</dbReference>
<dbReference type="GO" id="GO:0007612">
    <property type="term" value="P:learning"/>
    <property type="evidence" value="ECO:0000315"/>
    <property type="project" value="MGI"/>
</dbReference>
<dbReference type="GO" id="GO:0007626">
    <property type="term" value="P:locomotory behavior"/>
    <property type="evidence" value="ECO:0000315"/>
    <property type="project" value="MGI"/>
</dbReference>
<dbReference type="CDD" id="cd11283">
    <property type="entry name" value="ADF_GMF-beta_like"/>
    <property type="match status" value="1"/>
</dbReference>
<dbReference type="FunFam" id="3.40.20.10:FF:000024">
    <property type="entry name" value="Glia maturation factor"/>
    <property type="match status" value="1"/>
</dbReference>
<dbReference type="Gene3D" id="3.40.20.10">
    <property type="entry name" value="Severin"/>
    <property type="match status" value="1"/>
</dbReference>
<dbReference type="InterPro" id="IPR002108">
    <property type="entry name" value="ADF-H"/>
</dbReference>
<dbReference type="InterPro" id="IPR029006">
    <property type="entry name" value="ADF-H/Gelsolin-like_dom_sf"/>
</dbReference>
<dbReference type="InterPro" id="IPR011171">
    <property type="entry name" value="GMF"/>
</dbReference>
<dbReference type="PANTHER" id="PTHR11249:SF3">
    <property type="entry name" value="GLIA MATURATION FACTOR BETA"/>
    <property type="match status" value="1"/>
</dbReference>
<dbReference type="PANTHER" id="PTHR11249">
    <property type="entry name" value="GLIAL FACTOR NATURATION FACTOR"/>
    <property type="match status" value="1"/>
</dbReference>
<dbReference type="Pfam" id="PF00241">
    <property type="entry name" value="Cofilin_ADF"/>
    <property type="match status" value="1"/>
</dbReference>
<dbReference type="PIRSF" id="PIRSF001788">
    <property type="entry name" value="GMF-beta"/>
    <property type="match status" value="1"/>
</dbReference>
<dbReference type="SMART" id="SM00102">
    <property type="entry name" value="ADF"/>
    <property type="match status" value="1"/>
</dbReference>
<dbReference type="SUPFAM" id="SSF55753">
    <property type="entry name" value="Actin depolymerizing proteins"/>
    <property type="match status" value="1"/>
</dbReference>
<dbReference type="PROSITE" id="PS51263">
    <property type="entry name" value="ADF_H"/>
    <property type="match status" value="1"/>
</dbReference>
<feature type="initiator methionine" description="Removed" evidence="2">
    <location>
        <position position="1"/>
    </location>
</feature>
<feature type="chain" id="PRO_0000214944" description="Glia maturation factor beta">
    <location>
        <begin position="2"/>
        <end position="142"/>
    </location>
</feature>
<feature type="domain" description="ADF-H" evidence="3">
    <location>
        <begin position="4"/>
        <end position="139"/>
    </location>
</feature>
<feature type="modified residue" description="N-acetylserine" evidence="2">
    <location>
        <position position="2"/>
    </location>
</feature>
<feature type="sequence conflict" description="In Ref. 1; AAG22803." evidence="4" ref="1">
    <original>E</original>
    <variation>K</variation>
    <location>
        <position position="40"/>
    </location>
</feature>
<feature type="helix" evidence="5">
    <location>
        <begin position="12"/>
        <end position="22"/>
    </location>
</feature>
<feature type="strand" evidence="5">
    <location>
        <begin position="30"/>
        <end position="36"/>
    </location>
</feature>
<feature type="strand" evidence="5">
    <location>
        <begin position="38"/>
        <end position="40"/>
    </location>
</feature>
<feature type="strand" evidence="5">
    <location>
        <begin position="42"/>
        <end position="51"/>
    </location>
</feature>
<feature type="helix" evidence="5">
    <location>
        <begin position="54"/>
        <end position="57"/>
    </location>
</feature>
<feature type="helix" evidence="5">
    <location>
        <begin position="58"/>
        <end position="60"/>
    </location>
</feature>
<feature type="strand" evidence="5">
    <location>
        <begin position="63"/>
        <end position="65"/>
    </location>
</feature>
<feature type="strand" evidence="5">
    <location>
        <begin position="67"/>
        <end position="72"/>
    </location>
</feature>
<feature type="strand" evidence="5">
    <location>
        <begin position="86"/>
        <end position="91"/>
    </location>
</feature>
<feature type="helix" evidence="5">
    <location>
        <begin position="98"/>
        <end position="114"/>
    </location>
</feature>
<feature type="strand" evidence="5">
    <location>
        <begin position="118"/>
        <end position="125"/>
    </location>
</feature>
<feature type="helix" evidence="5">
    <location>
        <begin position="126"/>
        <end position="128"/>
    </location>
</feature>
<feature type="helix" evidence="5">
    <location>
        <begin position="131"/>
        <end position="139"/>
    </location>
</feature>
<keyword id="KW-0002">3D-structure</keyword>
<keyword id="KW-0007">Acetylation</keyword>
<keyword id="KW-0339">Growth factor</keyword>
<keyword id="KW-0597">Phosphoprotein</keyword>
<keyword id="KW-1185">Reference proteome</keyword>
<sequence length="142" mass="16723">MSESLVVCDVAEDLVEKLRKFRFRKETHNAAIIMKIDKDERLVVLDEELEGVSPDELKDELPERQPRFIVYSYKYQHDDGRVSYPLCFIFSSPVGCKPEQQMMYAGSKNKLVQTAELTKVFEIRNTEDLTEEWLREKLGFFH</sequence>
<protein>
    <recommendedName>
        <fullName>Glia maturation factor beta</fullName>
        <shortName>GMF-beta</shortName>
    </recommendedName>
</protein>
<organism>
    <name type="scientific">Mus musculus</name>
    <name type="common">Mouse</name>
    <dbReference type="NCBI Taxonomy" id="10090"/>
    <lineage>
        <taxon>Eukaryota</taxon>
        <taxon>Metazoa</taxon>
        <taxon>Chordata</taxon>
        <taxon>Craniata</taxon>
        <taxon>Vertebrata</taxon>
        <taxon>Euteleostomi</taxon>
        <taxon>Mammalia</taxon>
        <taxon>Eutheria</taxon>
        <taxon>Euarchontoglires</taxon>
        <taxon>Glires</taxon>
        <taxon>Rodentia</taxon>
        <taxon>Myomorpha</taxon>
        <taxon>Muroidea</taxon>
        <taxon>Muridae</taxon>
        <taxon>Murinae</taxon>
        <taxon>Mus</taxon>
        <taxon>Mus</taxon>
    </lineage>
</organism>
<evidence type="ECO:0000250" key="1"/>
<evidence type="ECO:0000250" key="2">
    <source>
        <dbReference type="UniProtKB" id="P60984"/>
    </source>
</evidence>
<evidence type="ECO:0000255" key="3">
    <source>
        <dbReference type="PROSITE-ProRule" id="PRU00599"/>
    </source>
</evidence>
<evidence type="ECO:0000305" key="4"/>
<evidence type="ECO:0007829" key="5">
    <source>
        <dbReference type="PDB" id="1V6F"/>
    </source>
</evidence>
<proteinExistence type="evidence at protein level"/>
<gene>
    <name type="primary">Gmfb</name>
</gene>